<dbReference type="EC" id="7.3.2.1" evidence="1"/>
<dbReference type="EMBL" id="AL766855">
    <property type="protein sequence ID" value="CAD47609.1"/>
    <property type="molecule type" value="Genomic_DNA"/>
</dbReference>
<dbReference type="SMR" id="P63371"/>
<dbReference type="KEGG" id="san:gbs1950"/>
<dbReference type="eggNOG" id="COG1117">
    <property type="taxonomic scope" value="Bacteria"/>
</dbReference>
<dbReference type="HOGENOM" id="CLU_000604_1_22_9"/>
<dbReference type="Proteomes" id="UP000000823">
    <property type="component" value="Chromosome"/>
</dbReference>
<dbReference type="GO" id="GO:0005886">
    <property type="term" value="C:plasma membrane"/>
    <property type="evidence" value="ECO:0007669"/>
    <property type="project" value="UniProtKB-SubCell"/>
</dbReference>
<dbReference type="GO" id="GO:0005524">
    <property type="term" value="F:ATP binding"/>
    <property type="evidence" value="ECO:0007669"/>
    <property type="project" value="UniProtKB-KW"/>
</dbReference>
<dbReference type="GO" id="GO:0016887">
    <property type="term" value="F:ATP hydrolysis activity"/>
    <property type="evidence" value="ECO:0007669"/>
    <property type="project" value="InterPro"/>
</dbReference>
<dbReference type="GO" id="GO:0015415">
    <property type="term" value="F:ATPase-coupled phosphate ion transmembrane transporter activity"/>
    <property type="evidence" value="ECO:0007669"/>
    <property type="project" value="UniProtKB-EC"/>
</dbReference>
<dbReference type="GO" id="GO:0035435">
    <property type="term" value="P:phosphate ion transmembrane transport"/>
    <property type="evidence" value="ECO:0007669"/>
    <property type="project" value="InterPro"/>
</dbReference>
<dbReference type="CDD" id="cd03260">
    <property type="entry name" value="ABC_PstB_phosphate_transporter"/>
    <property type="match status" value="1"/>
</dbReference>
<dbReference type="FunFam" id="3.40.50.300:FF:000132">
    <property type="entry name" value="Phosphate import ATP-binding protein PstB"/>
    <property type="match status" value="1"/>
</dbReference>
<dbReference type="Gene3D" id="3.40.50.300">
    <property type="entry name" value="P-loop containing nucleotide triphosphate hydrolases"/>
    <property type="match status" value="1"/>
</dbReference>
<dbReference type="InterPro" id="IPR003593">
    <property type="entry name" value="AAA+_ATPase"/>
</dbReference>
<dbReference type="InterPro" id="IPR003439">
    <property type="entry name" value="ABC_transporter-like_ATP-bd"/>
</dbReference>
<dbReference type="InterPro" id="IPR017871">
    <property type="entry name" value="ABC_transporter-like_CS"/>
</dbReference>
<dbReference type="InterPro" id="IPR027417">
    <property type="entry name" value="P-loop_NTPase"/>
</dbReference>
<dbReference type="InterPro" id="IPR005670">
    <property type="entry name" value="PstB-like"/>
</dbReference>
<dbReference type="NCBIfam" id="TIGR00972">
    <property type="entry name" value="3a0107s01c2"/>
    <property type="match status" value="1"/>
</dbReference>
<dbReference type="PANTHER" id="PTHR43423">
    <property type="entry name" value="ABC TRANSPORTER I FAMILY MEMBER 17"/>
    <property type="match status" value="1"/>
</dbReference>
<dbReference type="PANTHER" id="PTHR43423:SF1">
    <property type="entry name" value="ABC TRANSPORTER I FAMILY MEMBER 17"/>
    <property type="match status" value="1"/>
</dbReference>
<dbReference type="Pfam" id="PF00005">
    <property type="entry name" value="ABC_tran"/>
    <property type="match status" value="1"/>
</dbReference>
<dbReference type="SMART" id="SM00382">
    <property type="entry name" value="AAA"/>
    <property type="match status" value="1"/>
</dbReference>
<dbReference type="SUPFAM" id="SSF52540">
    <property type="entry name" value="P-loop containing nucleoside triphosphate hydrolases"/>
    <property type="match status" value="1"/>
</dbReference>
<dbReference type="PROSITE" id="PS00211">
    <property type="entry name" value="ABC_TRANSPORTER_1"/>
    <property type="match status" value="1"/>
</dbReference>
<dbReference type="PROSITE" id="PS50893">
    <property type="entry name" value="ABC_TRANSPORTER_2"/>
    <property type="match status" value="1"/>
</dbReference>
<dbReference type="PROSITE" id="PS51238">
    <property type="entry name" value="PSTB"/>
    <property type="match status" value="1"/>
</dbReference>
<reference key="1">
    <citation type="journal article" date="2002" name="Mol. Microbiol.">
        <title>Genome sequence of Streptococcus agalactiae, a pathogen causing invasive neonatal disease.</title>
        <authorList>
            <person name="Glaser P."/>
            <person name="Rusniok C."/>
            <person name="Buchrieser C."/>
            <person name="Chevalier F."/>
            <person name="Frangeul L."/>
            <person name="Msadek T."/>
            <person name="Zouine M."/>
            <person name="Couve E."/>
            <person name="Lalioui L."/>
            <person name="Poyart C."/>
            <person name="Trieu-Cuot P."/>
            <person name="Kunst F."/>
        </authorList>
    </citation>
    <scope>NUCLEOTIDE SEQUENCE [LARGE SCALE GENOMIC DNA]</scope>
    <source>
        <strain>NEM316</strain>
    </source>
</reference>
<sequence>MSRTVSKLVINNLDLYYGEFHALKDVNLDIEEKEITAFIGPSGCGKSTLLKSINRMNDLVKNCKITGDITLEGEDVYRQLDINQLRKKVGMVFQKPNPFPMSIYDNVAFGPRTHGIHSKAELDDIVERSLKQAALWDEVKDRLHKSALGMSGGQQQRLCIARALAIEPDVLLMDEPTSALDPISTAKIEELVIQLKKNYTIVIVTHNMQQAVRISDKTAFFLMGEVVEYNKTSQLFSLPQDERTENYITGRFG</sequence>
<feature type="chain" id="PRO_0000092890" description="Phosphate import ATP-binding protein PstB 3">
    <location>
        <begin position="1"/>
        <end position="253"/>
    </location>
</feature>
<feature type="domain" description="ABC transporter" evidence="1">
    <location>
        <begin position="8"/>
        <end position="248"/>
    </location>
</feature>
<feature type="binding site" evidence="1">
    <location>
        <begin position="40"/>
        <end position="47"/>
    </location>
    <ligand>
        <name>ATP</name>
        <dbReference type="ChEBI" id="CHEBI:30616"/>
    </ligand>
</feature>
<gene>
    <name evidence="1" type="primary">pstB3</name>
    <name type="ordered locus">gbs1950</name>
</gene>
<keyword id="KW-0067">ATP-binding</keyword>
<keyword id="KW-1003">Cell membrane</keyword>
<keyword id="KW-0472">Membrane</keyword>
<keyword id="KW-0547">Nucleotide-binding</keyword>
<keyword id="KW-0592">Phosphate transport</keyword>
<keyword id="KW-1278">Translocase</keyword>
<keyword id="KW-0813">Transport</keyword>
<evidence type="ECO:0000255" key="1">
    <source>
        <dbReference type="HAMAP-Rule" id="MF_01702"/>
    </source>
</evidence>
<organism>
    <name type="scientific">Streptococcus agalactiae serotype III (strain NEM316)</name>
    <dbReference type="NCBI Taxonomy" id="211110"/>
    <lineage>
        <taxon>Bacteria</taxon>
        <taxon>Bacillati</taxon>
        <taxon>Bacillota</taxon>
        <taxon>Bacilli</taxon>
        <taxon>Lactobacillales</taxon>
        <taxon>Streptococcaceae</taxon>
        <taxon>Streptococcus</taxon>
    </lineage>
</organism>
<protein>
    <recommendedName>
        <fullName evidence="1">Phosphate import ATP-binding protein PstB 3</fullName>
        <ecNumber evidence="1">7.3.2.1</ecNumber>
    </recommendedName>
    <alternativeName>
        <fullName evidence="1">ABC phosphate transporter 3</fullName>
    </alternativeName>
    <alternativeName>
        <fullName evidence="1">Phosphate-transporting ATPase 3</fullName>
    </alternativeName>
</protein>
<accession>P63371</accession>
<accession>Q8DX90</accession>
<accession>Q8E313</accession>
<name>PSTB3_STRA3</name>
<comment type="function">
    <text evidence="1">Part of the ABC transporter complex PstSACB involved in phosphate import. Responsible for energy coupling to the transport system.</text>
</comment>
<comment type="catalytic activity">
    <reaction evidence="1">
        <text>phosphate(out) + ATP + H2O = ADP + 2 phosphate(in) + H(+)</text>
        <dbReference type="Rhea" id="RHEA:24440"/>
        <dbReference type="ChEBI" id="CHEBI:15377"/>
        <dbReference type="ChEBI" id="CHEBI:15378"/>
        <dbReference type="ChEBI" id="CHEBI:30616"/>
        <dbReference type="ChEBI" id="CHEBI:43474"/>
        <dbReference type="ChEBI" id="CHEBI:456216"/>
        <dbReference type="EC" id="7.3.2.1"/>
    </reaction>
</comment>
<comment type="subunit">
    <text evidence="1">The complex is composed of two ATP-binding proteins (PstB), two transmembrane proteins (PstC and PstA) and a solute-binding protein (PstS).</text>
</comment>
<comment type="subcellular location">
    <subcellularLocation>
        <location evidence="1">Cell membrane</location>
        <topology evidence="1">Peripheral membrane protein</topology>
    </subcellularLocation>
</comment>
<comment type="similarity">
    <text evidence="1">Belongs to the ABC transporter superfamily. Phosphate importer (TC 3.A.1.7) family.</text>
</comment>
<proteinExistence type="inferred from homology"/>